<name>UNG_CLOP1</name>
<gene>
    <name evidence="1" type="primary">ung</name>
    <name type="ordered locus">CPF_0258</name>
</gene>
<keyword id="KW-0963">Cytoplasm</keyword>
<keyword id="KW-0227">DNA damage</keyword>
<keyword id="KW-0234">DNA repair</keyword>
<keyword id="KW-0378">Hydrolase</keyword>
<protein>
    <recommendedName>
        <fullName evidence="1">Uracil-DNA glycosylase</fullName>
        <shortName evidence="1">UDG</shortName>
        <ecNumber evidence="1">3.2.2.27</ecNumber>
    </recommendedName>
</protein>
<sequence length="225" mass="25874">MAAEFNNDWDDLLKDEFEKEYYLNLRKFLINEYKTQKIHPSMYDIFNALKFTPYKDVKVVILGQDPYHGPNQAHGFSFSVKPGVQTPPSLRNMFKELNSDLGCYIPNNGFLESWAKQGILLLNTVLTVREGQANSHKGKGWEIFTDRVIELLNKREEPIVFILWGRNAISKEALITNSIHKIIKSVHPSPLSATRGFFGSKPFSKTNDFLVSINKEPIDWQIPNI</sequence>
<accession>Q0TUH0</accession>
<dbReference type="EC" id="3.2.2.27" evidence="1"/>
<dbReference type="EMBL" id="CP000246">
    <property type="protein sequence ID" value="ABG82389.1"/>
    <property type="molecule type" value="Genomic_DNA"/>
</dbReference>
<dbReference type="RefSeq" id="WP_004458079.1">
    <property type="nucleotide sequence ID" value="NC_008261.1"/>
</dbReference>
<dbReference type="SMR" id="Q0TUH0"/>
<dbReference type="STRING" id="195103.CPF_0258"/>
<dbReference type="PaxDb" id="195103-CPF_0258"/>
<dbReference type="KEGG" id="cpf:CPF_0258"/>
<dbReference type="eggNOG" id="COG0692">
    <property type="taxonomic scope" value="Bacteria"/>
</dbReference>
<dbReference type="HOGENOM" id="CLU_032162_3_0_9"/>
<dbReference type="Proteomes" id="UP000001823">
    <property type="component" value="Chromosome"/>
</dbReference>
<dbReference type="GO" id="GO:0005737">
    <property type="term" value="C:cytoplasm"/>
    <property type="evidence" value="ECO:0007669"/>
    <property type="project" value="UniProtKB-SubCell"/>
</dbReference>
<dbReference type="GO" id="GO:0004844">
    <property type="term" value="F:uracil DNA N-glycosylase activity"/>
    <property type="evidence" value="ECO:0007669"/>
    <property type="project" value="UniProtKB-UniRule"/>
</dbReference>
<dbReference type="GO" id="GO:0097510">
    <property type="term" value="P:base-excision repair, AP site formation via deaminated base removal"/>
    <property type="evidence" value="ECO:0007669"/>
    <property type="project" value="TreeGrafter"/>
</dbReference>
<dbReference type="CDD" id="cd10027">
    <property type="entry name" value="UDG-F1-like"/>
    <property type="match status" value="1"/>
</dbReference>
<dbReference type="FunFam" id="3.40.470.10:FF:000001">
    <property type="entry name" value="Uracil-DNA glycosylase"/>
    <property type="match status" value="1"/>
</dbReference>
<dbReference type="Gene3D" id="3.40.470.10">
    <property type="entry name" value="Uracil-DNA glycosylase-like domain"/>
    <property type="match status" value="1"/>
</dbReference>
<dbReference type="HAMAP" id="MF_00148">
    <property type="entry name" value="UDG"/>
    <property type="match status" value="1"/>
</dbReference>
<dbReference type="InterPro" id="IPR002043">
    <property type="entry name" value="UDG_fam1"/>
</dbReference>
<dbReference type="InterPro" id="IPR018085">
    <property type="entry name" value="Ura-DNA_Glyclase_AS"/>
</dbReference>
<dbReference type="InterPro" id="IPR005122">
    <property type="entry name" value="Uracil-DNA_glycosylase-like"/>
</dbReference>
<dbReference type="InterPro" id="IPR036895">
    <property type="entry name" value="Uracil-DNA_glycosylase-like_sf"/>
</dbReference>
<dbReference type="NCBIfam" id="NF003588">
    <property type="entry name" value="PRK05254.1-1"/>
    <property type="match status" value="1"/>
</dbReference>
<dbReference type="NCBIfam" id="NF003589">
    <property type="entry name" value="PRK05254.1-2"/>
    <property type="match status" value="1"/>
</dbReference>
<dbReference type="NCBIfam" id="NF003591">
    <property type="entry name" value="PRK05254.1-4"/>
    <property type="match status" value="1"/>
</dbReference>
<dbReference type="NCBIfam" id="NF003592">
    <property type="entry name" value="PRK05254.1-5"/>
    <property type="match status" value="1"/>
</dbReference>
<dbReference type="NCBIfam" id="TIGR00628">
    <property type="entry name" value="ung"/>
    <property type="match status" value="1"/>
</dbReference>
<dbReference type="PANTHER" id="PTHR11264">
    <property type="entry name" value="URACIL-DNA GLYCOSYLASE"/>
    <property type="match status" value="1"/>
</dbReference>
<dbReference type="PANTHER" id="PTHR11264:SF0">
    <property type="entry name" value="URACIL-DNA GLYCOSYLASE"/>
    <property type="match status" value="1"/>
</dbReference>
<dbReference type="Pfam" id="PF03167">
    <property type="entry name" value="UDG"/>
    <property type="match status" value="1"/>
</dbReference>
<dbReference type="SMART" id="SM00986">
    <property type="entry name" value="UDG"/>
    <property type="match status" value="1"/>
</dbReference>
<dbReference type="SMART" id="SM00987">
    <property type="entry name" value="UreE_C"/>
    <property type="match status" value="1"/>
</dbReference>
<dbReference type="SUPFAM" id="SSF52141">
    <property type="entry name" value="Uracil-DNA glycosylase-like"/>
    <property type="match status" value="1"/>
</dbReference>
<dbReference type="PROSITE" id="PS00130">
    <property type="entry name" value="U_DNA_GLYCOSYLASE"/>
    <property type="match status" value="1"/>
</dbReference>
<reference key="1">
    <citation type="journal article" date="2006" name="Genome Res.">
        <title>Skewed genomic variability in strains of the toxigenic bacterial pathogen, Clostridium perfringens.</title>
        <authorList>
            <person name="Myers G.S.A."/>
            <person name="Rasko D.A."/>
            <person name="Cheung J.K."/>
            <person name="Ravel J."/>
            <person name="Seshadri R."/>
            <person name="DeBoy R.T."/>
            <person name="Ren Q."/>
            <person name="Varga J."/>
            <person name="Awad M.M."/>
            <person name="Brinkac L.M."/>
            <person name="Daugherty S.C."/>
            <person name="Haft D.H."/>
            <person name="Dodson R.J."/>
            <person name="Madupu R."/>
            <person name="Nelson W.C."/>
            <person name="Rosovitz M.J."/>
            <person name="Sullivan S.A."/>
            <person name="Khouri H."/>
            <person name="Dimitrov G.I."/>
            <person name="Watkins K.L."/>
            <person name="Mulligan S."/>
            <person name="Benton J."/>
            <person name="Radune D."/>
            <person name="Fisher D.J."/>
            <person name="Atkins H.S."/>
            <person name="Hiscox T."/>
            <person name="Jost B.H."/>
            <person name="Billington S.J."/>
            <person name="Songer J.G."/>
            <person name="McClane B.A."/>
            <person name="Titball R.W."/>
            <person name="Rood J.I."/>
            <person name="Melville S.B."/>
            <person name="Paulsen I.T."/>
        </authorList>
    </citation>
    <scope>NUCLEOTIDE SEQUENCE [LARGE SCALE GENOMIC DNA]</scope>
    <source>
        <strain>ATCC 13124 / DSM 756 / JCM 1290 / NCIMB 6125 / NCTC 8237 / S 107 / Type A</strain>
    </source>
</reference>
<evidence type="ECO:0000255" key="1">
    <source>
        <dbReference type="HAMAP-Rule" id="MF_00148"/>
    </source>
</evidence>
<feature type="chain" id="PRO_1000009881" description="Uracil-DNA glycosylase">
    <location>
        <begin position="1"/>
        <end position="225"/>
    </location>
</feature>
<feature type="active site" description="Proton acceptor" evidence="1">
    <location>
        <position position="65"/>
    </location>
</feature>
<organism>
    <name type="scientific">Clostridium perfringens (strain ATCC 13124 / DSM 756 / JCM 1290 / NCIMB 6125 / NCTC 8237 / Type A)</name>
    <dbReference type="NCBI Taxonomy" id="195103"/>
    <lineage>
        <taxon>Bacteria</taxon>
        <taxon>Bacillati</taxon>
        <taxon>Bacillota</taxon>
        <taxon>Clostridia</taxon>
        <taxon>Eubacteriales</taxon>
        <taxon>Clostridiaceae</taxon>
        <taxon>Clostridium</taxon>
    </lineage>
</organism>
<proteinExistence type="inferred from homology"/>
<comment type="function">
    <text evidence="1">Excises uracil residues from the DNA which can arise as a result of misincorporation of dUMP residues by DNA polymerase or due to deamination of cytosine.</text>
</comment>
<comment type="catalytic activity">
    <reaction evidence="1">
        <text>Hydrolyzes single-stranded DNA or mismatched double-stranded DNA and polynucleotides, releasing free uracil.</text>
        <dbReference type="EC" id="3.2.2.27"/>
    </reaction>
</comment>
<comment type="subcellular location">
    <subcellularLocation>
        <location evidence="1">Cytoplasm</location>
    </subcellularLocation>
</comment>
<comment type="similarity">
    <text evidence="1">Belongs to the uracil-DNA glycosylase (UDG) superfamily. UNG family.</text>
</comment>